<reference key="1">
    <citation type="journal article" date="2004" name="Nat. Biotechnol.">
        <title>The genome sequence of the extreme thermophile Thermus thermophilus.</title>
        <authorList>
            <person name="Henne A."/>
            <person name="Brueggemann H."/>
            <person name="Raasch C."/>
            <person name="Wiezer A."/>
            <person name="Hartsch T."/>
            <person name="Liesegang H."/>
            <person name="Johann A."/>
            <person name="Lienard T."/>
            <person name="Gohl O."/>
            <person name="Martinez-Arias R."/>
            <person name="Jacobi C."/>
            <person name="Starkuviene V."/>
            <person name="Schlenczeck S."/>
            <person name="Dencker S."/>
            <person name="Huber R."/>
            <person name="Klenk H.-P."/>
            <person name="Kramer W."/>
            <person name="Merkl R."/>
            <person name="Gottschalk G."/>
            <person name="Fritz H.-J."/>
        </authorList>
    </citation>
    <scope>NUCLEOTIDE SEQUENCE [LARGE SCALE GENOMIC DNA]</scope>
    <source>
        <strain>ATCC BAA-163 / DSM 7039 / HB27</strain>
    </source>
</reference>
<reference key="2">
    <citation type="journal article" date="2006" name="J. Biol. Chem.">
        <title>Identification of two tRNA thiolation genes required for cell growth at extremely high temperatures.</title>
        <authorList>
            <person name="Shigi N."/>
            <person name="Sakaguchi Y."/>
            <person name="Suzuki T."/>
            <person name="Watanabe K."/>
        </authorList>
    </citation>
    <scope>IDENTIFICATION BY MASS SPECTROMETRY</scope>
    <scope>FUNCTION</scope>
    <scope>CATALYTIC ACTIVITY</scope>
    <scope>TRNA-BINDING</scope>
    <scope>DISRUPTION PHENOTYPE</scope>
    <scope>PATHWAY</scope>
    <scope>SUBUNIT</scope>
    <source>
        <strain>ATCC BAA-163 / DSM 7039 / HB27</strain>
    </source>
</reference>
<reference key="3">
    <citation type="journal article" date="2012" name="J. Biol. Chem.">
        <title>Posttranslational modification of cellular proteins by a ubiquitin-like protein in bacteria.</title>
        <authorList>
            <person name="Shigi N."/>
        </authorList>
    </citation>
    <scope>CONJUGATION TO TTUB</scope>
    <scope>ACTIVITY REGULATION</scope>
    <source>
        <strain>ATCC BAA-163 / DSM 7039 / HB27</strain>
    </source>
</reference>
<reference key="4">
    <citation type="journal article" date="2013" name="Proteins">
        <title>Crystallographic and mutational studies on the tRNA thiouridine synthetase TtuA.</title>
        <authorList>
            <person name="Nakagawa H."/>
            <person name="Kuratani M."/>
            <person name="Goto-Ito S."/>
            <person name="Ito T."/>
            <person name="Katsura K."/>
            <person name="Terada T."/>
            <person name="Shirouzu M."/>
            <person name="Sekine S."/>
            <person name="Shigi N."/>
            <person name="Yokoyama S."/>
        </authorList>
    </citation>
    <scope>MUTAGENESIS OF LYS-58; ASP-59; CYS-130; CYS-133; HIS-157; ASN-158; ASP-161; GLU-203 AND CYS-222</scope>
    <source>
        <strain>ATCC BAA-163 / DSM 7039 / HB27</strain>
    </source>
</reference>
<reference evidence="13 14 15" key="5">
    <citation type="journal article" date="2017" name="Proc. Natl. Acad. Sci. U.S.A.">
        <title>Biochemical and structural characterization of oxygen-sensitive 2-thiouridine synthesis catalyzed by an iron-sulfur protein TtuA.</title>
        <authorList>
            <person name="Chen M."/>
            <person name="Asai S."/>
            <person name="Narai S."/>
            <person name="Nambu S."/>
            <person name="Omura N."/>
            <person name="Sakaguchi Y."/>
            <person name="Suzuki T."/>
            <person name="Ikeda-Saito M."/>
            <person name="Watanabe K."/>
            <person name="Yao M."/>
            <person name="Shigi N."/>
            <person name="Tanaka Y."/>
        </authorList>
    </citation>
    <scope>X-RAY CRYSTALLOGRAPHY (2.50 ANGSTROMS) IN COMPLEXES WITH ATP ANALOG; IRON-SULFUR (4FE-4S); ZINC AND TTUB PROTEIN</scope>
    <scope>FUNCTION</scope>
    <scope>CATALYTIC ACTIVITY</scope>
    <scope>COFACTOR</scope>
    <scope>SUBUNIT</scope>
    <scope>REACTION MECHANISM</scope>
    <scope>MUTAGENESIS OF CYS-130; CYS-133 AND CYS-222</scope>
</reference>
<dbReference type="EC" id="2.8.1.15" evidence="5 9"/>
<dbReference type="EMBL" id="AE017221">
    <property type="protein sequence ID" value="AAS80454.1"/>
    <property type="molecule type" value="Genomic_DNA"/>
</dbReference>
<dbReference type="RefSeq" id="WP_011172563.1">
    <property type="nucleotide sequence ID" value="NC_005835.1"/>
</dbReference>
<dbReference type="PDB" id="5B4E">
    <property type="method" value="X-ray"/>
    <property type="resolution" value="2.70 A"/>
    <property type="chains" value="A=1-321"/>
</dbReference>
<dbReference type="PDB" id="5B4F">
    <property type="method" value="X-ray"/>
    <property type="resolution" value="2.75 A"/>
    <property type="chains" value="A=1-321"/>
</dbReference>
<dbReference type="PDB" id="5GHA">
    <property type="method" value="X-ray"/>
    <property type="resolution" value="2.50 A"/>
    <property type="chains" value="A/B/C/D=1-321"/>
</dbReference>
<dbReference type="PDB" id="5ZTB">
    <property type="method" value="X-ray"/>
    <property type="resolution" value="2.20 A"/>
    <property type="chains" value="A/B/C=1-321"/>
</dbReference>
<dbReference type="PDBsum" id="5B4E"/>
<dbReference type="PDBsum" id="5B4F"/>
<dbReference type="PDBsum" id="5GHA"/>
<dbReference type="PDBsum" id="5ZTB"/>
<dbReference type="SMR" id="Q72LF3"/>
<dbReference type="KEGG" id="tth:TT_C0106"/>
<dbReference type="eggNOG" id="COG0037">
    <property type="taxonomic scope" value="Bacteria"/>
</dbReference>
<dbReference type="HOGENOM" id="CLU_026481_1_1_0"/>
<dbReference type="OrthoDB" id="9801054at2"/>
<dbReference type="BioCyc" id="MetaCyc:MONOMER-20129"/>
<dbReference type="BRENDA" id="2.8.1.15">
    <property type="organism ID" value="2305"/>
</dbReference>
<dbReference type="Proteomes" id="UP000000592">
    <property type="component" value="Chromosome"/>
</dbReference>
<dbReference type="GO" id="GO:0002144">
    <property type="term" value="C:cytosolic tRNA wobble base thiouridylase complex"/>
    <property type="evidence" value="ECO:0007669"/>
    <property type="project" value="TreeGrafter"/>
</dbReference>
<dbReference type="GO" id="GO:0051539">
    <property type="term" value="F:4 iron, 4 sulfur cluster binding"/>
    <property type="evidence" value="ECO:0007669"/>
    <property type="project" value="UniProtKB-KW"/>
</dbReference>
<dbReference type="GO" id="GO:0005524">
    <property type="term" value="F:ATP binding"/>
    <property type="evidence" value="ECO:0007669"/>
    <property type="project" value="UniProtKB-KW"/>
</dbReference>
<dbReference type="GO" id="GO:0046872">
    <property type="term" value="F:metal ion binding"/>
    <property type="evidence" value="ECO:0007669"/>
    <property type="project" value="UniProtKB-KW"/>
</dbReference>
<dbReference type="GO" id="GO:0016740">
    <property type="term" value="F:transferase activity"/>
    <property type="evidence" value="ECO:0007669"/>
    <property type="project" value="UniProtKB-KW"/>
</dbReference>
<dbReference type="GO" id="GO:0000049">
    <property type="term" value="F:tRNA binding"/>
    <property type="evidence" value="ECO:0007669"/>
    <property type="project" value="UniProtKB-KW"/>
</dbReference>
<dbReference type="GO" id="GO:0002143">
    <property type="term" value="P:tRNA wobble position uridine thiolation"/>
    <property type="evidence" value="ECO:0007669"/>
    <property type="project" value="TreeGrafter"/>
</dbReference>
<dbReference type="CDD" id="cd01993">
    <property type="entry name" value="TtuA-like"/>
    <property type="match status" value="1"/>
</dbReference>
<dbReference type="Gene3D" id="3.40.50.620">
    <property type="entry name" value="HUPs"/>
    <property type="match status" value="1"/>
</dbReference>
<dbReference type="InterPro" id="IPR000541">
    <property type="entry name" value="Ncs6/Tuc1/Ctu1"/>
</dbReference>
<dbReference type="InterPro" id="IPR014729">
    <property type="entry name" value="Rossmann-like_a/b/a_fold"/>
</dbReference>
<dbReference type="InterPro" id="IPR011063">
    <property type="entry name" value="TilS/TtcA_N"/>
</dbReference>
<dbReference type="InterPro" id="IPR035107">
    <property type="entry name" value="tRNA_thiolation_TtcA_Ctu1"/>
</dbReference>
<dbReference type="InterPro" id="IPR054306">
    <property type="entry name" value="TtuA-like_LIM_N"/>
</dbReference>
<dbReference type="NCBIfam" id="TIGR00269">
    <property type="entry name" value="TIGR00269 family protein"/>
    <property type="match status" value="1"/>
</dbReference>
<dbReference type="PANTHER" id="PTHR11807">
    <property type="entry name" value="ATPASES OF THE PP SUPERFAMILY-RELATED"/>
    <property type="match status" value="1"/>
</dbReference>
<dbReference type="PANTHER" id="PTHR11807:SF27">
    <property type="entry name" value="TRNA-5-METHYLURIDINE(54) 2-SULFURTRANSFERASE"/>
    <property type="match status" value="1"/>
</dbReference>
<dbReference type="Pfam" id="PF01171">
    <property type="entry name" value="ATP_bind_3"/>
    <property type="match status" value="1"/>
</dbReference>
<dbReference type="Pfam" id="PF22082">
    <property type="entry name" value="TtuA_LIM_N"/>
    <property type="match status" value="1"/>
</dbReference>
<dbReference type="PIRSF" id="PIRSF004976">
    <property type="entry name" value="ATPase_YdaO"/>
    <property type="match status" value="1"/>
</dbReference>
<dbReference type="SUPFAM" id="SSF52402">
    <property type="entry name" value="Adenine nucleotide alpha hydrolases-like"/>
    <property type="match status" value="1"/>
</dbReference>
<feature type="chain" id="PRO_0000442363" description="tRNA-5-methyluridine(54) 2-sulfurtransferase">
    <location>
        <begin position="1"/>
        <end position="321"/>
    </location>
</feature>
<feature type="binding site" evidence="5 13 14 15">
    <location>
        <position position="3"/>
    </location>
    <ligand>
        <name>Zn(2+)</name>
        <dbReference type="ChEBI" id="CHEBI:29105"/>
        <label>1</label>
    </ligand>
</feature>
<feature type="binding site" evidence="5 13 14 15">
    <location>
        <position position="6"/>
    </location>
    <ligand>
        <name>Zn(2+)</name>
        <dbReference type="ChEBI" id="CHEBI:29105"/>
        <label>1</label>
    </ligand>
</feature>
<feature type="binding site" evidence="5 13 14 15">
    <location>
        <position position="22"/>
    </location>
    <ligand>
        <name>Zn(2+)</name>
        <dbReference type="ChEBI" id="CHEBI:29105"/>
        <label>1</label>
    </ligand>
</feature>
<feature type="binding site" evidence="5 13 14 15">
    <location>
        <position position="25"/>
    </location>
    <ligand>
        <name>Zn(2+)</name>
        <dbReference type="ChEBI" id="CHEBI:29105"/>
        <label>1</label>
    </ligand>
</feature>
<feature type="binding site" evidence="5 13">
    <location>
        <begin position="53"/>
        <end position="55"/>
    </location>
    <ligand>
        <name>ATP</name>
        <dbReference type="ChEBI" id="CHEBI:30616"/>
    </ligand>
</feature>
<feature type="binding site" evidence="5 13">
    <location>
        <position position="59"/>
    </location>
    <ligand>
        <name>ATP</name>
        <dbReference type="ChEBI" id="CHEBI:30616"/>
    </ligand>
</feature>
<feature type="binding site" evidence="5 13">
    <location>
        <position position="79"/>
    </location>
    <ligand>
        <name>ATP</name>
        <dbReference type="ChEBI" id="CHEBI:30616"/>
    </ligand>
</feature>
<feature type="binding site" evidence="5 13 14">
    <location>
        <position position="130"/>
    </location>
    <ligand>
        <name>[4Fe-4S] cluster</name>
        <dbReference type="ChEBI" id="CHEBI:49883"/>
    </ligand>
</feature>
<feature type="binding site" evidence="5 13 14">
    <location>
        <position position="133"/>
    </location>
    <ligand>
        <name>[4Fe-4S] cluster</name>
        <dbReference type="ChEBI" id="CHEBI:49883"/>
    </ligand>
</feature>
<feature type="binding site" evidence="5 13">
    <location>
        <position position="156"/>
    </location>
    <ligand>
        <name>ATP</name>
        <dbReference type="ChEBI" id="CHEBI:30616"/>
    </ligand>
</feature>
<feature type="binding site" evidence="5 13">
    <location>
        <position position="161"/>
    </location>
    <ligand>
        <name>ATP</name>
        <dbReference type="ChEBI" id="CHEBI:30616"/>
    </ligand>
</feature>
<feature type="binding site" evidence="5 13 14">
    <location>
        <position position="222"/>
    </location>
    <ligand>
        <name>[4Fe-4S] cluster</name>
        <dbReference type="ChEBI" id="CHEBI:49883"/>
    </ligand>
</feature>
<feature type="binding site" evidence="5 13 14 15">
    <location>
        <position position="274"/>
    </location>
    <ligand>
        <name>Zn(2+)</name>
        <dbReference type="ChEBI" id="CHEBI:29105"/>
        <label>2</label>
    </ligand>
</feature>
<feature type="binding site" evidence="5 13 14 15">
    <location>
        <position position="277"/>
    </location>
    <ligand>
        <name>Zn(2+)</name>
        <dbReference type="ChEBI" id="CHEBI:29105"/>
        <label>2</label>
    </ligand>
</feature>
<feature type="binding site" evidence="5 13 14 15">
    <location>
        <position position="286"/>
    </location>
    <ligand>
        <name>Zn(2+)</name>
        <dbReference type="ChEBI" id="CHEBI:29105"/>
        <label>2</label>
    </ligand>
</feature>
<feature type="binding site" evidence="5 13 14 15">
    <location>
        <position position="289"/>
    </location>
    <ligand>
        <name>Zn(2+)</name>
        <dbReference type="ChEBI" id="CHEBI:29105"/>
        <label>2</label>
    </ligand>
</feature>
<feature type="cross-link" description="Glycyl lysine isopeptide (Lys-Gly) (interchain with G-Cter in TtuB)" evidence="3">
    <location>
        <position position="137"/>
    </location>
</feature>
<feature type="cross-link" description="Glycyl lysine isopeptide (Lys-Gly) (interchain with G-Cter in TtuB)" evidence="3">
    <location>
        <position position="226"/>
    </location>
</feature>
<feature type="cross-link" description="Glycyl lysine isopeptide (Lys-Gly) (interchain with G-Cter in TtuB)" evidence="3">
    <location>
        <position position="229"/>
    </location>
</feature>
<feature type="mutagenesis site" description="About 40% decrease in catalytic activity." evidence="4">
    <original>K</original>
    <variation>A</variation>
    <location>
        <position position="58"/>
    </location>
</feature>
<feature type="mutagenesis site" description="Complete loss of catalytic activity." evidence="4">
    <original>D</original>
    <variation>A</variation>
    <location>
        <position position="59"/>
    </location>
</feature>
<feature type="mutagenesis site" description="Decrease in Fe content, and about 90% decrease in catalytic activity." evidence="4 5">
    <original>C</original>
    <variation>S</variation>
    <location>
        <position position="130"/>
    </location>
</feature>
<feature type="mutagenesis site" description="Decrease in Fe content, and almost complete loss of catalytic activity." evidence="4 5">
    <original>C</original>
    <variation>S</variation>
    <location>
        <position position="133"/>
    </location>
</feature>
<feature type="mutagenesis site" description="Slight decrease in catalytic activity." evidence="4">
    <original>H</original>
    <variation>A</variation>
    <location>
        <position position="157"/>
    </location>
</feature>
<feature type="mutagenesis site" description="Slight decrease in catalytic activity." evidence="4">
    <original>N</original>
    <variation>A</variation>
    <location>
        <position position="158"/>
    </location>
</feature>
<feature type="mutagenesis site" description="Complete loss of catalytic activity." evidence="4">
    <original>D</original>
    <variation>A</variation>
    <location>
        <position position="161"/>
    </location>
</feature>
<feature type="mutagenesis site" description="About 80% decrease in catalytic activity." evidence="4">
    <original>E</original>
    <variation>A</variation>
    <location>
        <position position="203"/>
    </location>
</feature>
<feature type="mutagenesis site" description="Decrease in Fe content, and almost complete loss of catalytic activity." evidence="4 5">
    <original>C</original>
    <variation>S</variation>
    <location>
        <position position="222"/>
    </location>
</feature>
<feature type="turn" evidence="16">
    <location>
        <begin position="4"/>
        <end position="6"/>
    </location>
</feature>
<feature type="strand" evidence="16">
    <location>
        <begin position="11"/>
        <end position="14"/>
    </location>
</feature>
<feature type="turn" evidence="16">
    <location>
        <begin position="15"/>
        <end position="18"/>
    </location>
</feature>
<feature type="strand" evidence="16">
    <location>
        <begin position="19"/>
        <end position="21"/>
    </location>
</feature>
<feature type="helix" evidence="16">
    <location>
        <begin position="23"/>
        <end position="40"/>
    </location>
</feature>
<feature type="strand" evidence="16">
    <location>
        <begin position="49"/>
        <end position="53"/>
    </location>
</feature>
<feature type="helix" evidence="16">
    <location>
        <begin position="58"/>
        <end position="69"/>
    </location>
</feature>
<feature type="strand" evidence="16">
    <location>
        <begin position="73"/>
        <end position="80"/>
    </location>
</feature>
<feature type="helix" evidence="16">
    <location>
        <begin position="84"/>
        <end position="101"/>
    </location>
</feature>
<feature type="strand" evidence="16">
    <location>
        <begin position="105"/>
        <end position="109"/>
    </location>
</feature>
<feature type="helix" evidence="16">
    <location>
        <begin position="110"/>
        <end position="114"/>
    </location>
</feature>
<feature type="helix" evidence="16">
    <location>
        <begin position="118"/>
        <end position="124"/>
    </location>
</feature>
<feature type="strand" evidence="16">
    <location>
        <begin position="125"/>
        <end position="127"/>
    </location>
</feature>
<feature type="helix" evidence="16">
    <location>
        <begin position="129"/>
        <end position="147"/>
    </location>
</feature>
<feature type="strand" evidence="16">
    <location>
        <begin position="151"/>
        <end position="154"/>
    </location>
</feature>
<feature type="helix" evidence="16">
    <location>
        <begin position="159"/>
        <end position="171"/>
    </location>
</feature>
<feature type="strand" evidence="16">
    <location>
        <begin position="183"/>
        <end position="185"/>
    </location>
</feature>
<feature type="strand" evidence="16">
    <location>
        <begin position="193"/>
        <end position="195"/>
    </location>
</feature>
<feature type="turn" evidence="16">
    <location>
        <begin position="197"/>
        <end position="200"/>
    </location>
</feature>
<feature type="helix" evidence="16">
    <location>
        <begin position="203"/>
        <end position="212"/>
    </location>
</feature>
<feature type="helix" evidence="16">
    <location>
        <begin position="223"/>
        <end position="225"/>
    </location>
</feature>
<feature type="helix" evidence="16">
    <location>
        <begin position="229"/>
        <end position="243"/>
    </location>
</feature>
<feature type="helix" evidence="16">
    <location>
        <begin position="247"/>
        <end position="257"/>
    </location>
</feature>
<feature type="helix" evidence="16">
    <location>
        <begin position="260"/>
        <end position="262"/>
    </location>
</feature>
<feature type="turn" evidence="16">
    <location>
        <begin position="275"/>
        <end position="277"/>
    </location>
</feature>
<feature type="strand" evidence="16">
    <location>
        <begin position="280"/>
        <end position="285"/>
    </location>
</feature>
<feature type="helix" evidence="16">
    <location>
        <begin position="287"/>
        <end position="301"/>
    </location>
</feature>
<accession>Q72LF3</accession>
<evidence type="ECO:0000250" key="1">
    <source>
        <dbReference type="UniProtKB" id="Q9WY40"/>
    </source>
</evidence>
<evidence type="ECO:0000269" key="2">
    <source>
    </source>
</evidence>
<evidence type="ECO:0000269" key="3">
    <source>
    </source>
</evidence>
<evidence type="ECO:0000269" key="4">
    <source>
    </source>
</evidence>
<evidence type="ECO:0000269" key="5">
    <source>
    </source>
</evidence>
<evidence type="ECO:0000303" key="6">
    <source>
    </source>
</evidence>
<evidence type="ECO:0000303" key="7">
    <source>
    </source>
</evidence>
<evidence type="ECO:0000305" key="8"/>
<evidence type="ECO:0000305" key="9">
    <source>
    </source>
</evidence>
<evidence type="ECO:0000305" key="10">
    <source>
    </source>
</evidence>
<evidence type="ECO:0000305" key="11">
    <source>
    </source>
</evidence>
<evidence type="ECO:0000312" key="12">
    <source>
        <dbReference type="EMBL" id="AAS80454.1"/>
    </source>
</evidence>
<evidence type="ECO:0007744" key="13">
    <source>
        <dbReference type="PDB" id="5B4E"/>
    </source>
</evidence>
<evidence type="ECO:0007744" key="14">
    <source>
        <dbReference type="PDB" id="5B4F"/>
    </source>
</evidence>
<evidence type="ECO:0007744" key="15">
    <source>
        <dbReference type="PDB" id="5GHA"/>
    </source>
</evidence>
<evidence type="ECO:0007829" key="16">
    <source>
        <dbReference type="PDB" id="5ZTB"/>
    </source>
</evidence>
<sequence length="321" mass="36194">MVCKVCGQKAQVEMRSRGLALCREHYLDWFVKETERAIRRHRMLLPGERVLVAVSGGKDSLALWDVLSRLGYQAVGLHIELGIGEYSKRSLEVTQAFARERGLELLVVDLKEAYGFGVPELARLSGRVACSACGLSKRYIINQVAVEEGFRVVATGHNLDDEAAVLFGNLLNPQEETLSRQGPVLPEKPGLAARVKPFYRFSEREVLSYTLLRGIRYLHEECPNAKGAKSLLYKEALNLVERSMPGAKLRFLDGFLEKIRPRLDVGEEVALRECERCGYPTTGAVCAFCRMWDAVYRRAKKRKLLPEEVSFRPRVKPLRAG</sequence>
<gene>
    <name evidence="6" type="primary">ttuA</name>
    <name evidence="12" type="ordered locus">TT_C0106</name>
</gene>
<proteinExistence type="evidence at protein level"/>
<protein>
    <recommendedName>
        <fullName evidence="9">tRNA-5-methyluridine(54) 2-sulfurtransferase</fullName>
        <ecNumber evidence="5 9">2.8.1.15</ecNumber>
    </recommendedName>
    <alternativeName>
        <fullName evidence="7">2-thiouridine synthetase TtuA</fullName>
    </alternativeName>
    <alternativeName>
        <fullName evidence="6">tRNA two-thiouridine-synthesizing protein A</fullName>
    </alternativeName>
</protein>
<name>TTUA_THET2</name>
<keyword id="KW-0002">3D-structure</keyword>
<keyword id="KW-0004">4Fe-4S</keyword>
<keyword id="KW-0067">ATP-binding</keyword>
<keyword id="KW-0408">Iron</keyword>
<keyword id="KW-0411">Iron-sulfur</keyword>
<keyword id="KW-1017">Isopeptide bond</keyword>
<keyword id="KW-0460">Magnesium</keyword>
<keyword id="KW-0479">Metal-binding</keyword>
<keyword id="KW-0547">Nucleotide-binding</keyword>
<keyword id="KW-0694">RNA-binding</keyword>
<keyword id="KW-0808">Transferase</keyword>
<keyword id="KW-0819">tRNA processing</keyword>
<keyword id="KW-0820">tRNA-binding</keyword>
<keyword id="KW-0832">Ubl conjugation</keyword>
<keyword id="KW-0862">Zinc</keyword>
<comment type="function">
    <text evidence="2 5">Catalyzes the ATP-dependent 2-thiolation of 5-methyluridine residue at position 54 in the T loop of tRNAs, leading to 5-methyl-2-thiouridine (m(5)s(2)U or s(2)T) (PubMed:16547008, PubMed:28439027). This modification allows thermal stabilization of tRNAs in thermophilic microorganisms, and is required for cell growth at high temperatures (PubMed:16547008). TtuA transfers the S atom from the thiocarboxylated C-terminus of TtuB to tRNA (PubMed:28439027).</text>
</comment>
<comment type="catalytic activity">
    <reaction evidence="5 9">
        <text>[TtuB sulfur-carrier protein]-C-terminal-Gly-aminoethanethioate + 5-methyluridine(54) in tRNA + ATP + H2O = [TtuB sulfur-carrier protein]-C-terminal Gly-Gly + 5-methyl-2-thiouridine(54) in tRNA + AMP + diphosphate + H(+)</text>
        <dbReference type="Rhea" id="RHEA:52720"/>
        <dbReference type="Rhea" id="RHEA-COMP:10167"/>
        <dbReference type="Rhea" id="RHEA-COMP:13342"/>
        <dbReference type="Rhea" id="RHEA-COMP:13344"/>
        <dbReference type="Rhea" id="RHEA-COMP:19909"/>
        <dbReference type="ChEBI" id="CHEBI:15377"/>
        <dbReference type="ChEBI" id="CHEBI:15378"/>
        <dbReference type="ChEBI" id="CHEBI:30616"/>
        <dbReference type="ChEBI" id="CHEBI:33019"/>
        <dbReference type="ChEBI" id="CHEBI:74447"/>
        <dbReference type="ChEBI" id="CHEBI:90778"/>
        <dbReference type="ChEBI" id="CHEBI:136799"/>
        <dbReference type="ChEBI" id="CHEBI:232372"/>
        <dbReference type="ChEBI" id="CHEBI:456215"/>
        <dbReference type="EC" id="2.8.1.15"/>
    </reaction>
</comment>
<comment type="cofactor">
    <cofactor evidence="5">
        <name>[4Fe-4S] cluster</name>
        <dbReference type="ChEBI" id="CHEBI:49883"/>
    </cofactor>
    <text evidence="5">Binds 1 [4Fe-4S] cluster per subunit. The cluster is chelated by three Cys residues, the Fe with a free coordination site of the Fe-S cluster may contribute to an enzymatic role.</text>
</comment>
<comment type="cofactor">
    <cofactor evidence="1">
        <name>Mg(2+)</name>
        <dbReference type="ChEBI" id="CHEBI:18420"/>
    </cofactor>
</comment>
<comment type="activity regulation">
    <text evidence="10">Enzymatic activity may be regulated by TtuB conjugation.</text>
</comment>
<comment type="pathway">
    <text evidence="2">tRNA modification.</text>
</comment>
<comment type="subunit">
    <text evidence="2 5">Homodimer (PubMed:28439027). Is able to form a heterocomplex with TtuB (PubMed:16547008, PubMed:28439027).</text>
</comment>
<comment type="PTM">
    <text evidence="3">Conjugated to TtuB via covalent linkages involving Lys-137, Lys-226 and Lys-229.</text>
</comment>
<comment type="disruption phenotype">
    <text evidence="2">Disruption of this gene completely abolishes the presence of m(5)s(2)U in tRNAs, although its precursor, 5-methyluridine (ribothymidine) is present; other nucleoside modifications remain unchanged. These deletion mutants exhibit a temperature-sensitive phenotype, they are unable to grow above 80 degrees Celsius.</text>
</comment>
<comment type="miscellaneous">
    <text evidence="11">The thiolation reaction consists of two steps: a first activation step by ATP to form an adenylated intermediate of the target base of tRNA, and a second nucleophilic substitution step of the sulfur (S) atom supplied by thiocarboxylated TtuB for the adenyl group. However, it is not clear if the S-transfer mechanism is direct or indirect.</text>
</comment>
<comment type="similarity">
    <text evidence="8">Belongs to the TtcA family. TtuA subfamily.</text>
</comment>
<organism>
    <name type="scientific">Thermus thermophilus (strain ATCC BAA-163 / DSM 7039 / HB27)</name>
    <dbReference type="NCBI Taxonomy" id="262724"/>
    <lineage>
        <taxon>Bacteria</taxon>
        <taxon>Thermotogati</taxon>
        <taxon>Deinococcota</taxon>
        <taxon>Deinococci</taxon>
        <taxon>Thermales</taxon>
        <taxon>Thermaceae</taxon>
        <taxon>Thermus</taxon>
    </lineage>
</organism>